<comment type="function">
    <text evidence="1 2 6">Non-catalytic component of the MSL histone acetyltransferase complex, a multiprotein complex that mediates the majority of histone H4 acetylation at 'Lys-16' (H4K16ac), an epigenetic mark that prevents chromatin compaction (By similarity). The MSL complex is required for chromosome stability and genome integrity by maintaining homeostatic levels of H4K16ac (By similarity). MSL2 plays a key role in gene dosage by ensuring biallelic expression of a subset of dosage-sensitive genes, including many haploinsufficient genes (By similarity). Acts by promoting promoter-enhancer contacts, thereby preventing DNA methylation of one allele and creating a methylation-free environment for methylation-sensitive transcription factors such as SP1, KANSL1 and KANSL3 (By similarity). Also acts as an E3 ubiquitin ligase that promotes monoubiquitination of histone H2B at 'Lys-35' (H2BK34Ub), but not that of H2A (By similarity). Also involved in the DNA damage response by mediating ubiquitination of TP53/p53 and TP53BP1 (PubMed:23874665).</text>
</comment>
<comment type="catalytic activity">
    <reaction evidence="2">
        <text>S-ubiquitinyl-[E2 ubiquitin-conjugating enzyme]-L-cysteine + [acceptor protein]-L-lysine = [E2 ubiquitin-conjugating enzyme]-L-cysteine + N(6)-ubiquitinyl-[acceptor protein]-L-lysine.</text>
        <dbReference type="EC" id="2.3.2.27"/>
    </reaction>
</comment>
<comment type="pathway">
    <text evidence="2">Protein modification; protein ubiquitination.</text>
</comment>
<comment type="subunit">
    <text evidence="2">Component of a multisubunit histone acetyltransferase complex (MSL).</text>
</comment>
<comment type="subcellular location">
    <subcellularLocation>
        <location evidence="2">Nucleus</location>
    </subcellularLocation>
    <subcellularLocation>
        <location evidence="2">Chromosome</location>
    </subcellularLocation>
    <text evidence="1">Associates with both promoters and enhancers of target genes, maintaining promoter-enhancer contacts.</text>
</comment>
<comment type="similarity">
    <text evidence="7">Belongs to the MSL2 family.</text>
</comment>
<evidence type="ECO:0000250" key="1">
    <source>
        <dbReference type="UniProtKB" id="Q69ZF8"/>
    </source>
</evidence>
<evidence type="ECO:0000250" key="2">
    <source>
        <dbReference type="UniProtKB" id="Q9HCI7"/>
    </source>
</evidence>
<evidence type="ECO:0000255" key="3">
    <source>
        <dbReference type="PROSITE-ProRule" id="PRU00175"/>
    </source>
</evidence>
<evidence type="ECO:0000255" key="4">
    <source>
        <dbReference type="PROSITE-ProRule" id="PRU01396"/>
    </source>
</evidence>
<evidence type="ECO:0000256" key="5">
    <source>
        <dbReference type="SAM" id="MobiDB-lite"/>
    </source>
</evidence>
<evidence type="ECO:0000269" key="6">
    <source>
    </source>
</evidence>
<evidence type="ECO:0000305" key="7"/>
<feature type="chain" id="PRO_0000460357" description="E3 ubiquitin-protein ligase MSL2">
    <location>
        <begin position="1"/>
        <end position="579"/>
    </location>
</feature>
<feature type="domain" description="CXC MSL2-type" evidence="4">
    <location>
        <begin position="459"/>
        <end position="510"/>
    </location>
</feature>
<feature type="zinc finger region" description="RING-type" evidence="3">
    <location>
        <begin position="44"/>
        <end position="85"/>
    </location>
</feature>
<feature type="region of interest" description="Disordered" evidence="5">
    <location>
        <begin position="161"/>
        <end position="181"/>
    </location>
</feature>
<feature type="region of interest" description="Disordered" evidence="5">
    <location>
        <begin position="413"/>
        <end position="457"/>
    </location>
</feature>
<feature type="compositionally biased region" description="Basic and acidic residues" evidence="5">
    <location>
        <begin position="431"/>
        <end position="440"/>
    </location>
</feature>
<feature type="compositionally biased region" description="Polar residues" evidence="5">
    <location>
        <begin position="441"/>
        <end position="452"/>
    </location>
</feature>
<feature type="binding site" evidence="2">
    <location>
        <position position="44"/>
    </location>
    <ligand>
        <name>Zn(2+)</name>
        <dbReference type="ChEBI" id="CHEBI:29105"/>
        <label>1</label>
    </ligand>
</feature>
<feature type="binding site" evidence="2">
    <location>
        <position position="47"/>
    </location>
    <ligand>
        <name>Zn(2+)</name>
        <dbReference type="ChEBI" id="CHEBI:29105"/>
        <label>1</label>
    </ligand>
</feature>
<feature type="binding site" evidence="2">
    <location>
        <position position="62"/>
    </location>
    <ligand>
        <name>Zn(2+)</name>
        <dbReference type="ChEBI" id="CHEBI:29105"/>
        <label>2</label>
    </ligand>
</feature>
<feature type="binding site" evidence="2">
    <location>
        <position position="64"/>
    </location>
    <ligand>
        <name>Zn(2+)</name>
        <dbReference type="ChEBI" id="CHEBI:29105"/>
        <label>2</label>
    </ligand>
</feature>
<feature type="binding site" evidence="2">
    <location>
        <position position="67"/>
    </location>
    <ligand>
        <name>Zn(2+)</name>
        <dbReference type="ChEBI" id="CHEBI:29105"/>
        <label>1</label>
    </ligand>
</feature>
<feature type="binding site" evidence="2">
    <location>
        <position position="70"/>
    </location>
    <ligand>
        <name>Zn(2+)</name>
        <dbReference type="ChEBI" id="CHEBI:29105"/>
        <label>1</label>
    </ligand>
</feature>
<feature type="binding site" evidence="2">
    <location>
        <position position="81"/>
    </location>
    <ligand>
        <name>Zn(2+)</name>
        <dbReference type="ChEBI" id="CHEBI:29105"/>
        <label>2</label>
    </ligand>
</feature>
<feature type="binding site" evidence="2">
    <location>
        <position position="84"/>
    </location>
    <ligand>
        <name>Zn(2+)</name>
        <dbReference type="ChEBI" id="CHEBI:29105"/>
        <label>2</label>
    </ligand>
</feature>
<feature type="binding site" evidence="4">
    <location>
        <position position="464"/>
    </location>
    <ligand>
        <name>Zn(2+)</name>
        <dbReference type="ChEBI" id="CHEBI:29105"/>
        <label>3</label>
    </ligand>
</feature>
<feature type="binding site" evidence="4">
    <location>
        <position position="464"/>
    </location>
    <ligand>
        <name>Zn(2+)</name>
        <dbReference type="ChEBI" id="CHEBI:29105"/>
        <label>4</label>
    </ligand>
</feature>
<feature type="binding site" evidence="4">
    <location>
        <position position="466"/>
    </location>
    <ligand>
        <name>Zn(2+)</name>
        <dbReference type="ChEBI" id="CHEBI:29105"/>
        <label>3</label>
    </ligand>
</feature>
<feature type="binding site" evidence="4">
    <location>
        <position position="478"/>
    </location>
    <ligand>
        <name>Zn(2+)</name>
        <dbReference type="ChEBI" id="CHEBI:29105"/>
        <label>3</label>
    </ligand>
</feature>
<feature type="binding site" evidence="4">
    <location>
        <position position="478"/>
    </location>
    <ligand>
        <name>Zn(2+)</name>
        <dbReference type="ChEBI" id="CHEBI:29105"/>
        <label>5</label>
    </ligand>
</feature>
<feature type="binding site" evidence="4">
    <location>
        <position position="483"/>
    </location>
    <ligand>
        <name>Zn(2+)</name>
        <dbReference type="ChEBI" id="CHEBI:29105"/>
        <label>3</label>
    </ligand>
</feature>
<feature type="binding site" evidence="4">
    <location>
        <position position="485"/>
    </location>
    <ligand>
        <name>Zn(2+)</name>
        <dbReference type="ChEBI" id="CHEBI:29105"/>
        <label>4</label>
    </ligand>
</feature>
<feature type="binding site" evidence="4">
    <location>
        <position position="492"/>
    </location>
    <ligand>
        <name>Zn(2+)</name>
        <dbReference type="ChEBI" id="CHEBI:29105"/>
        <label>4</label>
    </ligand>
</feature>
<feature type="binding site" evidence="4">
    <location>
        <position position="492"/>
    </location>
    <ligand>
        <name>Zn(2+)</name>
        <dbReference type="ChEBI" id="CHEBI:29105"/>
        <label>5</label>
    </ligand>
</feature>
<feature type="binding site" evidence="4">
    <location>
        <position position="495"/>
    </location>
    <ligand>
        <name>Zn(2+)</name>
        <dbReference type="ChEBI" id="CHEBI:29105"/>
        <label>4</label>
    </ligand>
</feature>
<feature type="binding site" evidence="4">
    <location>
        <position position="497"/>
    </location>
    <ligand>
        <name>Zn(2+)</name>
        <dbReference type="ChEBI" id="CHEBI:29105"/>
        <label>5</label>
    </ligand>
</feature>
<feature type="binding site" evidence="4">
    <location>
        <position position="500"/>
    </location>
    <ligand>
        <name>Zn(2+)</name>
        <dbReference type="ChEBI" id="CHEBI:29105"/>
        <label>5</label>
    </ligand>
</feature>
<name>MSL2_CHICK</name>
<protein>
    <recommendedName>
        <fullName>E3 ubiquitin-protein ligase MSL2</fullName>
        <ecNumber evidence="2">2.3.2.27</ecNumber>
    </recommendedName>
    <alternativeName>
        <fullName>Male-specific lethal-2 homolog</fullName>
        <shortName>MSL-2</shortName>
    </alternativeName>
</protein>
<keyword id="KW-0156">Chromatin regulator</keyword>
<keyword id="KW-0158">Chromosome</keyword>
<keyword id="KW-0227">DNA damage</keyword>
<keyword id="KW-0479">Metal-binding</keyword>
<keyword id="KW-0539">Nucleus</keyword>
<keyword id="KW-1185">Reference proteome</keyword>
<keyword id="KW-0808">Transferase</keyword>
<keyword id="KW-0833">Ubl conjugation pathway</keyword>
<keyword id="KW-0862">Zinc</keyword>
<keyword id="KW-0863">Zinc-finger</keyword>
<proteinExistence type="inferred from homology"/>
<reference key="1">
    <citation type="journal article" date="2004" name="Nature">
        <title>Sequence and comparative analysis of the chicken genome provide unique perspectives on vertebrate evolution.</title>
        <authorList>
            <person name="Hillier L.W."/>
            <person name="Miller W."/>
            <person name="Birney E."/>
            <person name="Warren W."/>
            <person name="Hardison R.C."/>
            <person name="Ponting C.P."/>
            <person name="Bork P."/>
            <person name="Burt D.W."/>
            <person name="Groenen M.A.M."/>
            <person name="Delany M.E."/>
            <person name="Dodgson J.B."/>
            <person name="Chinwalla A.T."/>
            <person name="Cliften P.F."/>
            <person name="Clifton S.W."/>
            <person name="Delehaunty K.D."/>
            <person name="Fronick C."/>
            <person name="Fulton R.S."/>
            <person name="Graves T.A."/>
            <person name="Kremitzki C."/>
            <person name="Layman D."/>
            <person name="Magrini V."/>
            <person name="McPherson J.D."/>
            <person name="Miner T.L."/>
            <person name="Minx P."/>
            <person name="Nash W.E."/>
            <person name="Nhan M.N."/>
            <person name="Nelson J.O."/>
            <person name="Oddy L.G."/>
            <person name="Pohl C.S."/>
            <person name="Randall-Maher J."/>
            <person name="Smith S.M."/>
            <person name="Wallis J.W."/>
            <person name="Yang S.-P."/>
            <person name="Romanov M.N."/>
            <person name="Rondelli C.M."/>
            <person name="Paton B."/>
            <person name="Smith J."/>
            <person name="Morrice D."/>
            <person name="Daniels L."/>
            <person name="Tempest H.G."/>
            <person name="Robertson L."/>
            <person name="Masabanda J.S."/>
            <person name="Griffin D.K."/>
            <person name="Vignal A."/>
            <person name="Fillon V."/>
            <person name="Jacobbson L."/>
            <person name="Kerje S."/>
            <person name="Andersson L."/>
            <person name="Crooijmans R.P."/>
            <person name="Aerts J."/>
            <person name="van der Poel J.J."/>
            <person name="Ellegren H."/>
            <person name="Caldwell R.B."/>
            <person name="Hubbard S.J."/>
            <person name="Grafham D.V."/>
            <person name="Kierzek A.M."/>
            <person name="McLaren S.R."/>
            <person name="Overton I.M."/>
            <person name="Arakawa H."/>
            <person name="Beattie K.J."/>
            <person name="Bezzubov Y."/>
            <person name="Boardman P.E."/>
            <person name="Bonfield J.K."/>
            <person name="Croning M.D.R."/>
            <person name="Davies R.M."/>
            <person name="Francis M.D."/>
            <person name="Humphray S.J."/>
            <person name="Scott C.E."/>
            <person name="Taylor R.G."/>
            <person name="Tickle C."/>
            <person name="Brown W.R.A."/>
            <person name="Rogers J."/>
            <person name="Buerstedde J.-M."/>
            <person name="Wilson S.A."/>
            <person name="Stubbs L."/>
            <person name="Ovcharenko I."/>
            <person name="Gordon L."/>
            <person name="Lucas S."/>
            <person name="Miller M.M."/>
            <person name="Inoko H."/>
            <person name="Shiina T."/>
            <person name="Kaufman J."/>
            <person name="Salomonsen J."/>
            <person name="Skjoedt K."/>
            <person name="Wong G.K.-S."/>
            <person name="Wang J."/>
            <person name="Liu B."/>
            <person name="Wang J."/>
            <person name="Yu J."/>
            <person name="Yang H."/>
            <person name="Nefedov M."/>
            <person name="Koriabine M."/>
            <person name="Dejong P.J."/>
            <person name="Goodstadt L."/>
            <person name="Webber C."/>
            <person name="Dickens N.J."/>
            <person name="Letunic I."/>
            <person name="Suyama M."/>
            <person name="Torrents D."/>
            <person name="von Mering C."/>
            <person name="Zdobnov E.M."/>
            <person name="Makova K."/>
            <person name="Nekrutenko A."/>
            <person name="Elnitski L."/>
            <person name="Eswara P."/>
            <person name="King D.C."/>
            <person name="Yang S.-P."/>
            <person name="Tyekucheva S."/>
            <person name="Radakrishnan A."/>
            <person name="Harris R.S."/>
            <person name="Chiaromonte F."/>
            <person name="Taylor J."/>
            <person name="He J."/>
            <person name="Rijnkels M."/>
            <person name="Griffiths-Jones S."/>
            <person name="Ureta-Vidal A."/>
            <person name="Hoffman M.M."/>
            <person name="Severin J."/>
            <person name="Searle S.M.J."/>
            <person name="Law A.S."/>
            <person name="Speed D."/>
            <person name="Waddington D."/>
            <person name="Cheng Z."/>
            <person name="Tuzun E."/>
            <person name="Eichler E."/>
            <person name="Bao Z."/>
            <person name="Flicek P."/>
            <person name="Shteynberg D.D."/>
            <person name="Brent M.R."/>
            <person name="Bye J.M."/>
            <person name="Huckle E.J."/>
            <person name="Chatterji S."/>
            <person name="Dewey C."/>
            <person name="Pachter L."/>
            <person name="Kouranov A."/>
            <person name="Mourelatos Z."/>
            <person name="Hatzigeorgiou A.G."/>
            <person name="Paterson A.H."/>
            <person name="Ivarie R."/>
            <person name="Brandstrom M."/>
            <person name="Axelsson E."/>
            <person name="Backstrom N."/>
            <person name="Berlin S."/>
            <person name="Webster M.T."/>
            <person name="Pourquie O."/>
            <person name="Reymond A."/>
            <person name="Ucla C."/>
            <person name="Antonarakis S.E."/>
            <person name="Long M."/>
            <person name="Emerson J.J."/>
            <person name="Betran E."/>
            <person name="Dupanloup I."/>
            <person name="Kaessmann H."/>
            <person name="Hinrichs A.S."/>
            <person name="Bejerano G."/>
            <person name="Furey T.S."/>
            <person name="Harte R.A."/>
            <person name="Raney B."/>
            <person name="Siepel A."/>
            <person name="Kent W.J."/>
            <person name="Haussler D."/>
            <person name="Eyras E."/>
            <person name="Castelo R."/>
            <person name="Abril J.F."/>
            <person name="Castellano S."/>
            <person name="Camara F."/>
            <person name="Parra G."/>
            <person name="Guigo R."/>
            <person name="Bourque G."/>
            <person name="Tesler G."/>
            <person name="Pevzner P.A."/>
            <person name="Smit A."/>
            <person name="Fulton L.A."/>
            <person name="Mardis E.R."/>
            <person name="Wilson R.K."/>
        </authorList>
    </citation>
    <scope>NUCLEOTIDE SEQUENCE [LARGE SCALE GENOMIC DNA]</scope>
    <source>
        <strain>Red jungle fowl</strain>
    </source>
</reference>
<reference key="2">
    <citation type="journal article" date="2013" name="PLoS ONE">
        <title>Msl2 is a novel component of the vertebrate DNA damage response.</title>
        <authorList>
            <person name="Lai Z."/>
            <person name="Moravcova S."/>
            <person name="Canitrot Y."/>
            <person name="Andrzejewski L.P."/>
            <person name="Walshe D.M."/>
            <person name="Rea S."/>
        </authorList>
    </citation>
    <scope>FUNCTION</scope>
</reference>
<dbReference type="EC" id="2.3.2.27" evidence="2"/>
<dbReference type="RefSeq" id="XP_040535089.1">
    <property type="nucleotide sequence ID" value="XM_040679155.2"/>
</dbReference>
<dbReference type="RefSeq" id="XP_426675.2">
    <property type="nucleotide sequence ID" value="XM_426675.7"/>
</dbReference>
<dbReference type="SMR" id="A0A1D5NVS8"/>
<dbReference type="FunCoup" id="A0A1D5NVS8">
    <property type="interactions" value="1497"/>
</dbReference>
<dbReference type="STRING" id="9031.ENSGALP00000044455"/>
<dbReference type="PaxDb" id="9031-ENSGALP00000001839"/>
<dbReference type="Ensembl" id="ENSGALT00000152319">
    <property type="protein sequence ID" value="ENSGALP00000080914"/>
    <property type="gene ID" value="ENSGALG00000039294"/>
</dbReference>
<dbReference type="Ensembl" id="ENSGALT00010055240.1">
    <property type="protein sequence ID" value="ENSGALP00010033423.1"/>
    <property type="gene ID" value="ENSGALG00010022719.1"/>
</dbReference>
<dbReference type="GeneID" id="429119"/>
<dbReference type="CTD" id="55167"/>
<dbReference type="VEuPathDB" id="HostDB:geneid_429119"/>
<dbReference type="eggNOG" id="ENOG502QPJR">
    <property type="taxonomic scope" value="Eukaryota"/>
</dbReference>
<dbReference type="GeneTree" id="ENSGT00390000016814"/>
<dbReference type="InParanoid" id="A0A1D5NVS8"/>
<dbReference type="OMA" id="TEVCDSN"/>
<dbReference type="OrthoDB" id="10012174at2759"/>
<dbReference type="Reactome" id="R-GGA-3214847">
    <property type="pathway name" value="HATs acetylate histones"/>
</dbReference>
<dbReference type="UniPathway" id="UPA00143"/>
<dbReference type="Proteomes" id="UP000000539">
    <property type="component" value="Chromosome 9"/>
</dbReference>
<dbReference type="Bgee" id="ENSGALG00000039294">
    <property type="expression patterns" value="Expressed in spermatid and 12 other cell types or tissues"/>
</dbReference>
<dbReference type="GO" id="GO:0000785">
    <property type="term" value="C:chromatin"/>
    <property type="evidence" value="ECO:0000250"/>
    <property type="project" value="UniProtKB"/>
</dbReference>
<dbReference type="GO" id="GO:0072487">
    <property type="term" value="C:MSL complex"/>
    <property type="evidence" value="ECO:0000250"/>
    <property type="project" value="UniProtKB"/>
</dbReference>
<dbReference type="GO" id="GO:0005634">
    <property type="term" value="C:nucleus"/>
    <property type="evidence" value="ECO:0007669"/>
    <property type="project" value="UniProtKB-SubCell"/>
</dbReference>
<dbReference type="GO" id="GO:0141054">
    <property type="term" value="F:histone H2B ubiquitin ligase activity"/>
    <property type="evidence" value="ECO:0000250"/>
    <property type="project" value="UniProtKB"/>
</dbReference>
<dbReference type="GO" id="GO:0140585">
    <property type="term" value="F:promoter-enhancer loop anchoring activity"/>
    <property type="evidence" value="ECO:0007669"/>
    <property type="project" value="Ensembl"/>
</dbReference>
<dbReference type="GO" id="GO:0061630">
    <property type="term" value="F:ubiquitin protein ligase activity"/>
    <property type="evidence" value="ECO:0000250"/>
    <property type="project" value="UniProtKB"/>
</dbReference>
<dbReference type="GO" id="GO:0008270">
    <property type="term" value="F:zinc ion binding"/>
    <property type="evidence" value="ECO:0007669"/>
    <property type="project" value="UniProtKB-KW"/>
</dbReference>
<dbReference type="GO" id="GO:0006974">
    <property type="term" value="P:DNA damage response"/>
    <property type="evidence" value="ECO:0000314"/>
    <property type="project" value="UniProtKB"/>
</dbReference>
<dbReference type="GO" id="GO:0040029">
    <property type="term" value="P:epigenetic regulation of gene expression"/>
    <property type="evidence" value="ECO:0007669"/>
    <property type="project" value="Ensembl"/>
</dbReference>
<dbReference type="GO" id="GO:0045893">
    <property type="term" value="P:positive regulation of DNA-templated transcription"/>
    <property type="evidence" value="ECO:0007669"/>
    <property type="project" value="Ensembl"/>
</dbReference>
<dbReference type="GO" id="GO:0006513">
    <property type="term" value="P:protein monoubiquitination"/>
    <property type="evidence" value="ECO:0000250"/>
    <property type="project" value="UniProtKB"/>
</dbReference>
<dbReference type="GO" id="GO:0016567">
    <property type="term" value="P:protein ubiquitination"/>
    <property type="evidence" value="ECO:0000318"/>
    <property type="project" value="GO_Central"/>
</dbReference>
<dbReference type="CDD" id="cd13122">
    <property type="entry name" value="MSL2_CXC"/>
    <property type="match status" value="1"/>
</dbReference>
<dbReference type="CDD" id="cd16522">
    <property type="entry name" value="RING-HC_MSL2"/>
    <property type="match status" value="1"/>
</dbReference>
<dbReference type="FunFam" id="3.30.40.10:FF:000174">
    <property type="entry name" value="E3 ubiquitin-protein ligase MSL2"/>
    <property type="match status" value="1"/>
</dbReference>
<dbReference type="Gene3D" id="3.30.40.10">
    <property type="entry name" value="Zinc/RING finger domain, C3HC4 (zinc finger)"/>
    <property type="match status" value="1"/>
</dbReference>
<dbReference type="InterPro" id="IPR037922">
    <property type="entry name" value="MSL2"/>
</dbReference>
<dbReference type="InterPro" id="IPR032049">
    <property type="entry name" value="Msl2-CXC"/>
</dbReference>
<dbReference type="InterPro" id="IPR032043">
    <property type="entry name" value="Msl2_Znf-RING"/>
</dbReference>
<dbReference type="InterPro" id="IPR033467">
    <property type="entry name" value="Tesmin/TSO1-like_CXC"/>
</dbReference>
<dbReference type="InterPro" id="IPR001841">
    <property type="entry name" value="Znf_RING"/>
</dbReference>
<dbReference type="InterPro" id="IPR013083">
    <property type="entry name" value="Znf_RING/FYVE/PHD"/>
</dbReference>
<dbReference type="PANTHER" id="PTHR16048:SF3">
    <property type="entry name" value="E3 UBIQUITIN-PROTEIN LIGASE MSL2"/>
    <property type="match status" value="1"/>
</dbReference>
<dbReference type="PANTHER" id="PTHR16048">
    <property type="entry name" value="MSL2-RELATED"/>
    <property type="match status" value="1"/>
</dbReference>
<dbReference type="Pfam" id="PF16682">
    <property type="entry name" value="MSL2-CXC"/>
    <property type="match status" value="1"/>
</dbReference>
<dbReference type="Pfam" id="PF16685">
    <property type="entry name" value="zf-RING_10"/>
    <property type="match status" value="1"/>
</dbReference>
<dbReference type="SMART" id="SM01114">
    <property type="entry name" value="CXC"/>
    <property type="match status" value="1"/>
</dbReference>
<dbReference type="SUPFAM" id="SSF57850">
    <property type="entry name" value="RING/U-box"/>
    <property type="match status" value="1"/>
</dbReference>
<dbReference type="PROSITE" id="PS52051">
    <property type="entry name" value="CXC_MSL2"/>
    <property type="match status" value="1"/>
</dbReference>
<dbReference type="PROSITE" id="PS50089">
    <property type="entry name" value="ZF_RING_2"/>
    <property type="match status" value="1"/>
</dbReference>
<organism>
    <name type="scientific">Gallus gallus</name>
    <name type="common">Chicken</name>
    <dbReference type="NCBI Taxonomy" id="9031"/>
    <lineage>
        <taxon>Eukaryota</taxon>
        <taxon>Metazoa</taxon>
        <taxon>Chordata</taxon>
        <taxon>Craniata</taxon>
        <taxon>Vertebrata</taxon>
        <taxon>Euteleostomi</taxon>
        <taxon>Archelosauria</taxon>
        <taxon>Archosauria</taxon>
        <taxon>Dinosauria</taxon>
        <taxon>Saurischia</taxon>
        <taxon>Theropoda</taxon>
        <taxon>Coelurosauria</taxon>
        <taxon>Aves</taxon>
        <taxon>Neognathae</taxon>
        <taxon>Galloanserae</taxon>
        <taxon>Galliformes</taxon>
        <taxon>Phasianidae</taxon>
        <taxon>Phasianinae</taxon>
        <taxon>Gallus</taxon>
    </lineage>
</organism>
<gene>
    <name type="primary">MSL2</name>
</gene>
<accession>A0A1D5NVS8</accession>
<sequence length="579" mass="62252">MNPVNATALYVSASRLVLNYDPGDPQSFTEINKLLPYFRQSLSCCVCGNLLQDPIAPTNSTCQHYVCKTCKGKKMMMKPSCSWCKDYEQFEENKQLSILVNCYKKLCEYITQTPLARDIIQAVDCSADLLALLKDGSPLHEETEKSSDTALALCLTHSPVPSTSELTSDPPATLTSKPESTQNVDIRGSVINGLPNCNGLSVDKLGVNIPSPEHANTIDVCSTGEYMKNEDNSSSLQPVCDPVSTSDLCTTGIDICSFSEDIKPGGSLLLSVEEVLRSLETVSNTEVCGSNLQPSLEANVTNGPFLQLSPPPLSHNIFVSTDASPHGISCTAATPKVVKLNRKRSRSESDSEKVQPLPISSIICGPTLGASAPVTVKQENKMSLQPVATVPNGGTTPKISKTVLLSNKSVKKNLEHAPKKSHPKAKPGVLKTKDKAKEKVPSSNVMPGSPTKTVYKKPQEKKGCKCGRATQNPSVLTCRGQRCPCYSNRKACLDCICRGCQNSYMANGEKKLEAFAVPEKALEQTRLTLGINVTSIAVRNASTSTSVINVTGSPVTTFLAASTHDDKSLDEAIDVRYDC</sequence>